<feature type="chain" id="PRO_0000176207" description="Ribosomal RNA small subunit methyltransferase E 2">
    <location>
        <begin position="1"/>
        <end position="243"/>
    </location>
</feature>
<sequence>MKQIVLDENCLAGNFIIVKDAKIYHHLVNVRRLKKGDKLNILLKDKELRASEIVKIGSNFIKFTTNKIDKIEKNNFEISIFISSLKGRKIDLVLRQVVEIGVSEINIINADRSVSKIDINNASAKILRFSKIIDEALKQSGNKIVPKINFYNNFFYLPYSFCTTRYYVAHPSGMILSKNESFDNFGKIGIIIGPEGCFSESEIVFFKEKGFNFVRFNTPILRADTAIIYSLAYFKALLEDYNG</sequence>
<proteinExistence type="inferred from homology"/>
<comment type="function">
    <text evidence="1">Specifically methylates the N3 position of the uracil ring of uridine 1498 (m3U1498) in 16S rRNA. Acts on the fully assembled 30S ribosomal subunit (By similarity).</text>
</comment>
<comment type="catalytic activity">
    <reaction>
        <text>uridine(1498) in 16S rRNA + S-adenosyl-L-methionine = N(3)-methyluridine(1498) in 16S rRNA + S-adenosyl-L-homocysteine + H(+)</text>
        <dbReference type="Rhea" id="RHEA:42920"/>
        <dbReference type="Rhea" id="RHEA-COMP:10283"/>
        <dbReference type="Rhea" id="RHEA-COMP:10284"/>
        <dbReference type="ChEBI" id="CHEBI:15378"/>
        <dbReference type="ChEBI" id="CHEBI:57856"/>
        <dbReference type="ChEBI" id="CHEBI:59789"/>
        <dbReference type="ChEBI" id="CHEBI:65315"/>
        <dbReference type="ChEBI" id="CHEBI:74502"/>
        <dbReference type="EC" id="2.1.1.193"/>
    </reaction>
</comment>
<comment type="subcellular location">
    <subcellularLocation>
        <location evidence="1">Cytoplasm</location>
    </subcellularLocation>
</comment>
<comment type="similarity">
    <text evidence="2">Belongs to the RNA methyltransferase RsmE family.</text>
</comment>
<accession>O51333</accession>
<organism>
    <name type="scientific">Borreliella burgdorferi (strain ATCC 35210 / DSM 4680 / CIP 102532 / B31)</name>
    <name type="common">Borrelia burgdorferi</name>
    <dbReference type="NCBI Taxonomy" id="224326"/>
    <lineage>
        <taxon>Bacteria</taxon>
        <taxon>Pseudomonadati</taxon>
        <taxon>Spirochaetota</taxon>
        <taxon>Spirochaetia</taxon>
        <taxon>Spirochaetales</taxon>
        <taxon>Borreliaceae</taxon>
        <taxon>Borreliella</taxon>
    </lineage>
</organism>
<gene>
    <name type="primary">rsmE2</name>
    <name type="ordered locus">BB_0358</name>
</gene>
<protein>
    <recommendedName>
        <fullName>Ribosomal RNA small subunit methyltransferase E 2</fullName>
        <ecNumber>2.1.1.193</ecNumber>
    </recommendedName>
    <alternativeName>
        <fullName>16S rRNA m3U1498 methyltransferase 2</fullName>
    </alternativeName>
</protein>
<dbReference type="EC" id="2.1.1.193"/>
<dbReference type="EMBL" id="AE000783">
    <property type="protein sequence ID" value="AAC66730.1"/>
    <property type="molecule type" value="Genomic_DNA"/>
</dbReference>
<dbReference type="PIR" id="E70144">
    <property type="entry name" value="E70144"/>
</dbReference>
<dbReference type="RefSeq" id="NP_212492.1">
    <property type="nucleotide sequence ID" value="NC_001318.1"/>
</dbReference>
<dbReference type="RefSeq" id="WP_010889733.1">
    <property type="nucleotide sequence ID" value="NC_001318.1"/>
</dbReference>
<dbReference type="SMR" id="O51333"/>
<dbReference type="STRING" id="224326.BB_0358"/>
<dbReference type="PaxDb" id="224326-BB_0358"/>
<dbReference type="EnsemblBacteria" id="AAC66730">
    <property type="protein sequence ID" value="AAC66730"/>
    <property type="gene ID" value="BB_0358"/>
</dbReference>
<dbReference type="KEGG" id="bbu:BB_0358"/>
<dbReference type="PATRIC" id="fig|224326.49.peg.754"/>
<dbReference type="HOGENOM" id="CLU_067442_3_0_12"/>
<dbReference type="OrthoDB" id="9815641at2"/>
<dbReference type="Proteomes" id="UP000001807">
    <property type="component" value="Chromosome"/>
</dbReference>
<dbReference type="GO" id="GO:0005737">
    <property type="term" value="C:cytoplasm"/>
    <property type="evidence" value="ECO:0007669"/>
    <property type="project" value="UniProtKB-SubCell"/>
</dbReference>
<dbReference type="GO" id="GO:0070042">
    <property type="term" value="F:rRNA (uridine-N3-)-methyltransferase activity"/>
    <property type="evidence" value="ECO:0007669"/>
    <property type="project" value="TreeGrafter"/>
</dbReference>
<dbReference type="GO" id="GO:0070475">
    <property type="term" value="P:rRNA base methylation"/>
    <property type="evidence" value="ECO:0007669"/>
    <property type="project" value="TreeGrafter"/>
</dbReference>
<dbReference type="CDD" id="cd18084">
    <property type="entry name" value="RsmE-like"/>
    <property type="match status" value="1"/>
</dbReference>
<dbReference type="Gene3D" id="3.40.1280.10">
    <property type="match status" value="1"/>
</dbReference>
<dbReference type="InterPro" id="IPR029028">
    <property type="entry name" value="Alpha/beta_knot_MTases"/>
</dbReference>
<dbReference type="InterPro" id="IPR015947">
    <property type="entry name" value="PUA-like_sf"/>
</dbReference>
<dbReference type="InterPro" id="IPR006700">
    <property type="entry name" value="RsmE"/>
</dbReference>
<dbReference type="InterPro" id="IPR046886">
    <property type="entry name" value="RsmE_MTase_dom"/>
</dbReference>
<dbReference type="InterPro" id="IPR046887">
    <property type="entry name" value="RsmE_PUA-like"/>
</dbReference>
<dbReference type="InterPro" id="IPR029026">
    <property type="entry name" value="tRNA_m1G_MTases_N"/>
</dbReference>
<dbReference type="NCBIfam" id="NF008698">
    <property type="entry name" value="PRK11713.4-5"/>
    <property type="match status" value="1"/>
</dbReference>
<dbReference type="NCBIfam" id="TIGR00046">
    <property type="entry name" value="RsmE family RNA methyltransferase"/>
    <property type="match status" value="1"/>
</dbReference>
<dbReference type="PANTHER" id="PTHR30027:SF3">
    <property type="entry name" value="16S RRNA (URACIL(1498)-N(3))-METHYLTRANSFERASE"/>
    <property type="match status" value="1"/>
</dbReference>
<dbReference type="PANTHER" id="PTHR30027">
    <property type="entry name" value="RIBOSOMAL RNA SMALL SUBUNIT METHYLTRANSFERASE E"/>
    <property type="match status" value="1"/>
</dbReference>
<dbReference type="Pfam" id="PF04452">
    <property type="entry name" value="Methyltrans_RNA"/>
    <property type="match status" value="1"/>
</dbReference>
<dbReference type="Pfam" id="PF20260">
    <property type="entry name" value="PUA_4"/>
    <property type="match status" value="1"/>
</dbReference>
<dbReference type="PIRSF" id="PIRSF015601">
    <property type="entry name" value="MTase_slr0722"/>
    <property type="match status" value="1"/>
</dbReference>
<dbReference type="SUPFAM" id="SSF75217">
    <property type="entry name" value="alpha/beta knot"/>
    <property type="match status" value="1"/>
</dbReference>
<dbReference type="SUPFAM" id="SSF88697">
    <property type="entry name" value="PUA domain-like"/>
    <property type="match status" value="1"/>
</dbReference>
<keyword id="KW-0963">Cytoplasm</keyword>
<keyword id="KW-0489">Methyltransferase</keyword>
<keyword id="KW-1185">Reference proteome</keyword>
<keyword id="KW-0698">rRNA processing</keyword>
<keyword id="KW-0949">S-adenosyl-L-methionine</keyword>
<keyword id="KW-0808">Transferase</keyword>
<name>RSME2_BORBU</name>
<reference key="1">
    <citation type="journal article" date="1997" name="Nature">
        <title>Genomic sequence of a Lyme disease spirochaete, Borrelia burgdorferi.</title>
        <authorList>
            <person name="Fraser C.M."/>
            <person name="Casjens S."/>
            <person name="Huang W.M."/>
            <person name="Sutton G.G."/>
            <person name="Clayton R.A."/>
            <person name="Lathigra R."/>
            <person name="White O."/>
            <person name="Ketchum K.A."/>
            <person name="Dodson R.J."/>
            <person name="Hickey E.K."/>
            <person name="Gwinn M.L."/>
            <person name="Dougherty B.A."/>
            <person name="Tomb J.-F."/>
            <person name="Fleischmann R.D."/>
            <person name="Richardson D.L."/>
            <person name="Peterson J.D."/>
            <person name="Kerlavage A.R."/>
            <person name="Quackenbush J."/>
            <person name="Salzberg S.L."/>
            <person name="Hanson M."/>
            <person name="van Vugt R."/>
            <person name="Palmer N."/>
            <person name="Adams M.D."/>
            <person name="Gocayne J.D."/>
            <person name="Weidman J.F."/>
            <person name="Utterback T.R."/>
            <person name="Watthey L."/>
            <person name="McDonald L.A."/>
            <person name="Artiach P."/>
            <person name="Bowman C."/>
            <person name="Garland S.A."/>
            <person name="Fujii C."/>
            <person name="Cotton M.D."/>
            <person name="Horst K."/>
            <person name="Roberts K.M."/>
            <person name="Hatch B."/>
            <person name="Smith H.O."/>
            <person name="Venter J.C."/>
        </authorList>
    </citation>
    <scope>NUCLEOTIDE SEQUENCE [LARGE SCALE GENOMIC DNA]</scope>
    <source>
        <strain>ATCC 35210 / DSM 4680 / CIP 102532 / B31</strain>
    </source>
</reference>
<evidence type="ECO:0000250" key="1"/>
<evidence type="ECO:0000305" key="2"/>